<sequence length="250" mass="28521">MAVTKLVLVRHGESQWNNENRFTGWYDVDLSEKGVGEAKAAGKLLKEEGYSFDFAYTSVLKRAIHTLWNVLDELDQAWLPVEKSWKLNERHYGALQGLNKAETAEKYGDEQVKQWRRGFAVTPPELTKDDERYPGHDPRYAQLTEKELPLTESLALTIDRVIPYWNETILPRMKSGERIIIAAHGNSLRALVKYLDNMSEEEILELNIPTGVPLVYEFDENFKPIKHYYLGNADEIAAKAAAVANQGKAK</sequence>
<proteinExistence type="inferred from homology"/>
<keyword id="KW-0312">Gluconeogenesis</keyword>
<keyword id="KW-0324">Glycolysis</keyword>
<keyword id="KW-0413">Isomerase</keyword>
<keyword id="KW-1185">Reference proteome</keyword>
<organism>
    <name type="scientific">Citrobacter koseri (strain ATCC BAA-895 / CDC 4225-83 / SGSC4696)</name>
    <dbReference type="NCBI Taxonomy" id="290338"/>
    <lineage>
        <taxon>Bacteria</taxon>
        <taxon>Pseudomonadati</taxon>
        <taxon>Pseudomonadota</taxon>
        <taxon>Gammaproteobacteria</taxon>
        <taxon>Enterobacterales</taxon>
        <taxon>Enterobacteriaceae</taxon>
        <taxon>Citrobacter</taxon>
    </lineage>
</organism>
<evidence type="ECO:0000255" key="1">
    <source>
        <dbReference type="HAMAP-Rule" id="MF_01039"/>
    </source>
</evidence>
<accession>A8AJ40</accession>
<name>GPMA_CITK8</name>
<feature type="chain" id="PRO_1000064048" description="2,3-bisphosphoglycerate-dependent phosphoglycerate mutase">
    <location>
        <begin position="1"/>
        <end position="250"/>
    </location>
</feature>
<feature type="active site" description="Tele-phosphohistidine intermediate" evidence="1">
    <location>
        <position position="11"/>
    </location>
</feature>
<feature type="active site" description="Proton donor/acceptor" evidence="1">
    <location>
        <position position="89"/>
    </location>
</feature>
<feature type="binding site" evidence="1">
    <location>
        <begin position="10"/>
        <end position="17"/>
    </location>
    <ligand>
        <name>substrate</name>
    </ligand>
</feature>
<feature type="binding site" evidence="1">
    <location>
        <begin position="23"/>
        <end position="24"/>
    </location>
    <ligand>
        <name>substrate</name>
    </ligand>
</feature>
<feature type="binding site" evidence="1">
    <location>
        <position position="62"/>
    </location>
    <ligand>
        <name>substrate</name>
    </ligand>
</feature>
<feature type="binding site" evidence="1">
    <location>
        <begin position="89"/>
        <end position="92"/>
    </location>
    <ligand>
        <name>substrate</name>
    </ligand>
</feature>
<feature type="binding site" evidence="1">
    <location>
        <position position="100"/>
    </location>
    <ligand>
        <name>substrate</name>
    </ligand>
</feature>
<feature type="binding site" evidence="1">
    <location>
        <begin position="116"/>
        <end position="117"/>
    </location>
    <ligand>
        <name>substrate</name>
    </ligand>
</feature>
<feature type="binding site" evidence="1">
    <location>
        <begin position="185"/>
        <end position="186"/>
    </location>
    <ligand>
        <name>substrate</name>
    </ligand>
</feature>
<feature type="site" description="Transition state stabilizer" evidence="1">
    <location>
        <position position="184"/>
    </location>
</feature>
<comment type="function">
    <text evidence="1">Catalyzes the interconversion of 2-phosphoglycerate and 3-phosphoglycerate.</text>
</comment>
<comment type="catalytic activity">
    <reaction evidence="1">
        <text>(2R)-2-phosphoglycerate = (2R)-3-phosphoglycerate</text>
        <dbReference type="Rhea" id="RHEA:15901"/>
        <dbReference type="ChEBI" id="CHEBI:58272"/>
        <dbReference type="ChEBI" id="CHEBI:58289"/>
        <dbReference type="EC" id="5.4.2.11"/>
    </reaction>
</comment>
<comment type="pathway">
    <text evidence="1">Carbohydrate degradation; glycolysis; pyruvate from D-glyceraldehyde 3-phosphate: step 3/5.</text>
</comment>
<comment type="subunit">
    <text evidence="1">Homodimer.</text>
</comment>
<comment type="similarity">
    <text evidence="1">Belongs to the phosphoglycerate mutase family. BPG-dependent PGAM subfamily.</text>
</comment>
<reference key="1">
    <citation type="submission" date="2007-08" db="EMBL/GenBank/DDBJ databases">
        <authorList>
            <consortium name="The Citrobacter koseri Genome Sequencing Project"/>
            <person name="McClelland M."/>
            <person name="Sanderson E.K."/>
            <person name="Porwollik S."/>
            <person name="Spieth J."/>
            <person name="Clifton W.S."/>
            <person name="Latreille P."/>
            <person name="Courtney L."/>
            <person name="Wang C."/>
            <person name="Pepin K."/>
            <person name="Bhonagiri V."/>
            <person name="Nash W."/>
            <person name="Johnson M."/>
            <person name="Thiruvilangam P."/>
            <person name="Wilson R."/>
        </authorList>
    </citation>
    <scope>NUCLEOTIDE SEQUENCE [LARGE SCALE GENOMIC DNA]</scope>
    <source>
        <strain>ATCC BAA-895 / CDC 4225-83 / SGSC4696</strain>
    </source>
</reference>
<gene>
    <name evidence="1" type="primary">gpmA</name>
    <name type="ordered locus">CKO_02381</name>
</gene>
<protein>
    <recommendedName>
        <fullName evidence="1">2,3-bisphosphoglycerate-dependent phosphoglycerate mutase</fullName>
        <shortName evidence="1">BPG-dependent PGAM</shortName>
        <shortName evidence="1">PGAM</shortName>
        <shortName evidence="1">Phosphoglyceromutase</shortName>
        <shortName evidence="1">dPGM</shortName>
        <ecNumber evidence="1">5.4.2.11</ecNumber>
    </recommendedName>
</protein>
<dbReference type="EC" id="5.4.2.11" evidence="1"/>
<dbReference type="EMBL" id="CP000822">
    <property type="protein sequence ID" value="ABV13503.1"/>
    <property type="molecule type" value="Genomic_DNA"/>
</dbReference>
<dbReference type="RefSeq" id="WP_012133230.1">
    <property type="nucleotide sequence ID" value="NC_009792.1"/>
</dbReference>
<dbReference type="SMR" id="A8AJ40"/>
<dbReference type="STRING" id="290338.CKO_02381"/>
<dbReference type="GeneID" id="45136281"/>
<dbReference type="KEGG" id="cko:CKO_02381"/>
<dbReference type="HOGENOM" id="CLU_033323_1_1_6"/>
<dbReference type="OrthoDB" id="9781415at2"/>
<dbReference type="UniPathway" id="UPA00109">
    <property type="reaction ID" value="UER00186"/>
</dbReference>
<dbReference type="Proteomes" id="UP000008148">
    <property type="component" value="Chromosome"/>
</dbReference>
<dbReference type="GO" id="GO:0004619">
    <property type="term" value="F:phosphoglycerate mutase activity"/>
    <property type="evidence" value="ECO:0007669"/>
    <property type="project" value="UniProtKB-EC"/>
</dbReference>
<dbReference type="GO" id="GO:0006094">
    <property type="term" value="P:gluconeogenesis"/>
    <property type="evidence" value="ECO:0007669"/>
    <property type="project" value="UniProtKB-UniRule"/>
</dbReference>
<dbReference type="GO" id="GO:0006096">
    <property type="term" value="P:glycolytic process"/>
    <property type="evidence" value="ECO:0007669"/>
    <property type="project" value="UniProtKB-UniRule"/>
</dbReference>
<dbReference type="CDD" id="cd07067">
    <property type="entry name" value="HP_PGM_like"/>
    <property type="match status" value="1"/>
</dbReference>
<dbReference type="FunFam" id="3.40.50.1240:FF:000003">
    <property type="entry name" value="2,3-bisphosphoglycerate-dependent phosphoglycerate mutase"/>
    <property type="match status" value="1"/>
</dbReference>
<dbReference type="Gene3D" id="3.40.50.1240">
    <property type="entry name" value="Phosphoglycerate mutase-like"/>
    <property type="match status" value="1"/>
</dbReference>
<dbReference type="HAMAP" id="MF_01039">
    <property type="entry name" value="PGAM_GpmA"/>
    <property type="match status" value="1"/>
</dbReference>
<dbReference type="InterPro" id="IPR013078">
    <property type="entry name" value="His_Pase_superF_clade-1"/>
</dbReference>
<dbReference type="InterPro" id="IPR029033">
    <property type="entry name" value="His_PPase_superfam"/>
</dbReference>
<dbReference type="InterPro" id="IPR001345">
    <property type="entry name" value="PG/BPGM_mutase_AS"/>
</dbReference>
<dbReference type="InterPro" id="IPR005952">
    <property type="entry name" value="Phosphogly_mut1"/>
</dbReference>
<dbReference type="NCBIfam" id="TIGR01258">
    <property type="entry name" value="pgm_1"/>
    <property type="match status" value="1"/>
</dbReference>
<dbReference type="NCBIfam" id="NF010713">
    <property type="entry name" value="PRK14115.1"/>
    <property type="match status" value="1"/>
</dbReference>
<dbReference type="PANTHER" id="PTHR11931">
    <property type="entry name" value="PHOSPHOGLYCERATE MUTASE"/>
    <property type="match status" value="1"/>
</dbReference>
<dbReference type="Pfam" id="PF00300">
    <property type="entry name" value="His_Phos_1"/>
    <property type="match status" value="1"/>
</dbReference>
<dbReference type="PIRSF" id="PIRSF000709">
    <property type="entry name" value="6PFK_2-Ptase"/>
    <property type="match status" value="1"/>
</dbReference>
<dbReference type="SMART" id="SM00855">
    <property type="entry name" value="PGAM"/>
    <property type="match status" value="1"/>
</dbReference>
<dbReference type="SUPFAM" id="SSF53254">
    <property type="entry name" value="Phosphoglycerate mutase-like"/>
    <property type="match status" value="1"/>
</dbReference>
<dbReference type="PROSITE" id="PS00175">
    <property type="entry name" value="PG_MUTASE"/>
    <property type="match status" value="1"/>
</dbReference>